<dbReference type="EC" id="6.1.1.20" evidence="1"/>
<dbReference type="EMBL" id="CP000419">
    <property type="protein sequence ID" value="ABJ66453.1"/>
    <property type="molecule type" value="Genomic_DNA"/>
</dbReference>
<dbReference type="RefSeq" id="WP_011681314.1">
    <property type="nucleotide sequence ID" value="NC_008532.1"/>
</dbReference>
<dbReference type="SMR" id="Q03K19"/>
<dbReference type="KEGG" id="ste:STER_1270"/>
<dbReference type="HOGENOM" id="CLU_025086_0_1_9"/>
<dbReference type="GO" id="GO:0005737">
    <property type="term" value="C:cytoplasm"/>
    <property type="evidence" value="ECO:0007669"/>
    <property type="project" value="UniProtKB-SubCell"/>
</dbReference>
<dbReference type="GO" id="GO:0005524">
    <property type="term" value="F:ATP binding"/>
    <property type="evidence" value="ECO:0007669"/>
    <property type="project" value="UniProtKB-UniRule"/>
</dbReference>
<dbReference type="GO" id="GO:0140096">
    <property type="term" value="F:catalytic activity, acting on a protein"/>
    <property type="evidence" value="ECO:0007669"/>
    <property type="project" value="UniProtKB-ARBA"/>
</dbReference>
<dbReference type="GO" id="GO:0000287">
    <property type="term" value="F:magnesium ion binding"/>
    <property type="evidence" value="ECO:0007669"/>
    <property type="project" value="UniProtKB-UniRule"/>
</dbReference>
<dbReference type="GO" id="GO:0004826">
    <property type="term" value="F:phenylalanine-tRNA ligase activity"/>
    <property type="evidence" value="ECO:0007669"/>
    <property type="project" value="UniProtKB-UniRule"/>
</dbReference>
<dbReference type="GO" id="GO:0016740">
    <property type="term" value="F:transferase activity"/>
    <property type="evidence" value="ECO:0007669"/>
    <property type="project" value="UniProtKB-ARBA"/>
</dbReference>
<dbReference type="GO" id="GO:0000049">
    <property type="term" value="F:tRNA binding"/>
    <property type="evidence" value="ECO:0007669"/>
    <property type="project" value="InterPro"/>
</dbReference>
<dbReference type="GO" id="GO:0006432">
    <property type="term" value="P:phenylalanyl-tRNA aminoacylation"/>
    <property type="evidence" value="ECO:0007669"/>
    <property type="project" value="UniProtKB-UniRule"/>
</dbReference>
<dbReference type="CDD" id="cd00496">
    <property type="entry name" value="PheRS_alpha_core"/>
    <property type="match status" value="1"/>
</dbReference>
<dbReference type="FunFam" id="3.30.930.10:FF:000003">
    <property type="entry name" value="Phenylalanine--tRNA ligase alpha subunit"/>
    <property type="match status" value="1"/>
</dbReference>
<dbReference type="Gene3D" id="3.30.930.10">
    <property type="entry name" value="Bira Bifunctional Protein, Domain 2"/>
    <property type="match status" value="1"/>
</dbReference>
<dbReference type="HAMAP" id="MF_00281">
    <property type="entry name" value="Phe_tRNA_synth_alpha1"/>
    <property type="match status" value="1"/>
</dbReference>
<dbReference type="InterPro" id="IPR006195">
    <property type="entry name" value="aa-tRNA-synth_II"/>
</dbReference>
<dbReference type="InterPro" id="IPR045864">
    <property type="entry name" value="aa-tRNA-synth_II/BPL/LPL"/>
</dbReference>
<dbReference type="InterPro" id="IPR004529">
    <property type="entry name" value="Phe-tRNA-synth_IIc_asu"/>
</dbReference>
<dbReference type="InterPro" id="IPR004188">
    <property type="entry name" value="Phe-tRNA_ligase_II_N"/>
</dbReference>
<dbReference type="InterPro" id="IPR022911">
    <property type="entry name" value="Phe_tRNA_ligase_alpha1_bac"/>
</dbReference>
<dbReference type="InterPro" id="IPR002319">
    <property type="entry name" value="Phenylalanyl-tRNA_Synthase"/>
</dbReference>
<dbReference type="InterPro" id="IPR010978">
    <property type="entry name" value="tRNA-bd_arm"/>
</dbReference>
<dbReference type="NCBIfam" id="TIGR00468">
    <property type="entry name" value="pheS"/>
    <property type="match status" value="1"/>
</dbReference>
<dbReference type="PANTHER" id="PTHR11538:SF41">
    <property type="entry name" value="PHENYLALANINE--TRNA LIGASE, MITOCHONDRIAL"/>
    <property type="match status" value="1"/>
</dbReference>
<dbReference type="PANTHER" id="PTHR11538">
    <property type="entry name" value="PHENYLALANYL-TRNA SYNTHETASE"/>
    <property type="match status" value="1"/>
</dbReference>
<dbReference type="Pfam" id="PF02912">
    <property type="entry name" value="Phe_tRNA-synt_N"/>
    <property type="match status" value="1"/>
</dbReference>
<dbReference type="Pfam" id="PF01409">
    <property type="entry name" value="tRNA-synt_2d"/>
    <property type="match status" value="1"/>
</dbReference>
<dbReference type="SUPFAM" id="SSF55681">
    <property type="entry name" value="Class II aaRS and biotin synthetases"/>
    <property type="match status" value="1"/>
</dbReference>
<dbReference type="SUPFAM" id="SSF46589">
    <property type="entry name" value="tRNA-binding arm"/>
    <property type="match status" value="1"/>
</dbReference>
<dbReference type="PROSITE" id="PS50862">
    <property type="entry name" value="AA_TRNA_LIGASE_II"/>
    <property type="match status" value="1"/>
</dbReference>
<organism>
    <name type="scientific">Streptococcus thermophilus (strain ATCC BAA-491 / LMD-9)</name>
    <dbReference type="NCBI Taxonomy" id="322159"/>
    <lineage>
        <taxon>Bacteria</taxon>
        <taxon>Bacillati</taxon>
        <taxon>Bacillota</taxon>
        <taxon>Bacilli</taxon>
        <taxon>Lactobacillales</taxon>
        <taxon>Streptococcaceae</taxon>
        <taxon>Streptococcus</taxon>
    </lineage>
</organism>
<proteinExistence type="inferred from homology"/>
<name>SYFA_STRTD</name>
<gene>
    <name evidence="1" type="primary">pheS</name>
    <name type="ordered locus">STER_1270</name>
</gene>
<sequence length="347" mass="39155">MDLQTQLQELKTSTQAKLAEMRGEHSKELQELRVAVLGKKGSLTELLKGLKDLPSEERPTVGKMVNEVRDVLTEAFDEAAKVVEAAKIQAQLDSESLDVTLPGRQVNLGNRHILSQIAEEIEDIFLGMGFQIVDGFEVETDYYNFERMNLPKDHPARDMQDTFYITEEILLRTHTSPVQARTLDKHDFSKGPLKMISPGRVFRRDTDDATHSHQFHQIEGLVVGKNISMGDLKGTLEMIIQKMFGAERRIRLRPSYFPFTEPSVEVDVSCFKCGGKGCNVCKNTGWIEILGAGMVHPQVLEMSGVDSEEYSGFAFGLGQERIAMLRYGINDIRGFYQGDVRFSEQFK</sequence>
<comment type="catalytic activity">
    <reaction evidence="1">
        <text>tRNA(Phe) + L-phenylalanine + ATP = L-phenylalanyl-tRNA(Phe) + AMP + diphosphate + H(+)</text>
        <dbReference type="Rhea" id="RHEA:19413"/>
        <dbReference type="Rhea" id="RHEA-COMP:9668"/>
        <dbReference type="Rhea" id="RHEA-COMP:9699"/>
        <dbReference type="ChEBI" id="CHEBI:15378"/>
        <dbReference type="ChEBI" id="CHEBI:30616"/>
        <dbReference type="ChEBI" id="CHEBI:33019"/>
        <dbReference type="ChEBI" id="CHEBI:58095"/>
        <dbReference type="ChEBI" id="CHEBI:78442"/>
        <dbReference type="ChEBI" id="CHEBI:78531"/>
        <dbReference type="ChEBI" id="CHEBI:456215"/>
        <dbReference type="EC" id="6.1.1.20"/>
    </reaction>
</comment>
<comment type="cofactor">
    <cofactor evidence="1">
        <name>Mg(2+)</name>
        <dbReference type="ChEBI" id="CHEBI:18420"/>
    </cofactor>
    <text evidence="1">Binds 2 magnesium ions per tetramer.</text>
</comment>
<comment type="subunit">
    <text evidence="1">Tetramer of two alpha and two beta subunits.</text>
</comment>
<comment type="subcellular location">
    <subcellularLocation>
        <location evidence="1">Cytoplasm</location>
    </subcellularLocation>
</comment>
<comment type="similarity">
    <text evidence="1">Belongs to the class-II aminoacyl-tRNA synthetase family. Phe-tRNA synthetase alpha subunit type 1 subfamily.</text>
</comment>
<feature type="chain" id="PRO_1000006909" description="Phenylalanine--tRNA ligase alpha subunit">
    <location>
        <begin position="1"/>
        <end position="347"/>
    </location>
</feature>
<feature type="binding site" evidence="1">
    <location>
        <position position="261"/>
    </location>
    <ligand>
        <name>Mg(2+)</name>
        <dbReference type="ChEBI" id="CHEBI:18420"/>
        <note>shared with beta subunit</note>
    </ligand>
</feature>
<reference key="1">
    <citation type="journal article" date="2006" name="Proc. Natl. Acad. Sci. U.S.A.">
        <title>Comparative genomics of the lactic acid bacteria.</title>
        <authorList>
            <person name="Makarova K.S."/>
            <person name="Slesarev A."/>
            <person name="Wolf Y.I."/>
            <person name="Sorokin A."/>
            <person name="Mirkin B."/>
            <person name="Koonin E.V."/>
            <person name="Pavlov A."/>
            <person name="Pavlova N."/>
            <person name="Karamychev V."/>
            <person name="Polouchine N."/>
            <person name="Shakhova V."/>
            <person name="Grigoriev I."/>
            <person name="Lou Y."/>
            <person name="Rohksar D."/>
            <person name="Lucas S."/>
            <person name="Huang K."/>
            <person name="Goodstein D.M."/>
            <person name="Hawkins T."/>
            <person name="Plengvidhya V."/>
            <person name="Welker D."/>
            <person name="Hughes J."/>
            <person name="Goh Y."/>
            <person name="Benson A."/>
            <person name="Baldwin K."/>
            <person name="Lee J.-H."/>
            <person name="Diaz-Muniz I."/>
            <person name="Dosti B."/>
            <person name="Smeianov V."/>
            <person name="Wechter W."/>
            <person name="Barabote R."/>
            <person name="Lorca G."/>
            <person name="Altermann E."/>
            <person name="Barrangou R."/>
            <person name="Ganesan B."/>
            <person name="Xie Y."/>
            <person name="Rawsthorne H."/>
            <person name="Tamir D."/>
            <person name="Parker C."/>
            <person name="Breidt F."/>
            <person name="Broadbent J.R."/>
            <person name="Hutkins R."/>
            <person name="O'Sullivan D."/>
            <person name="Steele J."/>
            <person name="Unlu G."/>
            <person name="Saier M.H. Jr."/>
            <person name="Klaenhammer T."/>
            <person name="Richardson P."/>
            <person name="Kozyavkin S."/>
            <person name="Weimer B.C."/>
            <person name="Mills D.A."/>
        </authorList>
    </citation>
    <scope>NUCLEOTIDE SEQUENCE [LARGE SCALE GENOMIC DNA]</scope>
    <source>
        <strain>ATCC BAA-491 / LMD-9</strain>
    </source>
</reference>
<accession>Q03K19</accession>
<evidence type="ECO:0000255" key="1">
    <source>
        <dbReference type="HAMAP-Rule" id="MF_00281"/>
    </source>
</evidence>
<protein>
    <recommendedName>
        <fullName evidence="1">Phenylalanine--tRNA ligase alpha subunit</fullName>
        <ecNumber evidence="1">6.1.1.20</ecNumber>
    </recommendedName>
    <alternativeName>
        <fullName evidence="1">Phenylalanyl-tRNA synthetase alpha subunit</fullName>
        <shortName evidence="1">PheRS</shortName>
    </alternativeName>
</protein>
<keyword id="KW-0030">Aminoacyl-tRNA synthetase</keyword>
<keyword id="KW-0067">ATP-binding</keyword>
<keyword id="KW-0963">Cytoplasm</keyword>
<keyword id="KW-0436">Ligase</keyword>
<keyword id="KW-0460">Magnesium</keyword>
<keyword id="KW-0479">Metal-binding</keyword>
<keyword id="KW-0547">Nucleotide-binding</keyword>
<keyword id="KW-0648">Protein biosynthesis</keyword>